<keyword id="KW-0217">Developmental protein</keyword>
<keyword id="KW-0221">Differentiation</keyword>
<keyword id="KW-0597">Phosphoprotein</keyword>
<keyword id="KW-1185">Reference proteome</keyword>
<keyword id="KW-0964">Secreted</keyword>
<keyword id="KW-0744">Spermatogenesis</keyword>
<evidence type="ECO:0000256" key="1">
    <source>
        <dbReference type="SAM" id="MobiDB-lite"/>
    </source>
</evidence>
<evidence type="ECO:0000305" key="2"/>
<evidence type="ECO:0007744" key="3">
    <source>
    </source>
</evidence>
<gene>
    <name type="primary">Spata20</name>
</gene>
<reference key="1">
    <citation type="journal article" date="2004" name="J. Androl.">
        <title>Cloning and characterization of rat spermatid protein SSP411: a thioredoxin-like protein.</title>
        <authorList>
            <person name="Shi H.-J."/>
            <person name="Wu A.Z."/>
            <person name="Santos M."/>
            <person name="Feng Z.-M."/>
            <person name="Huang L."/>
            <person name="Chen Y.-M."/>
            <person name="Zhu K."/>
            <person name="Chen C.-L.C."/>
        </authorList>
    </citation>
    <scope>NUCLEOTIDE SEQUENCE [MRNA]</scope>
    <source>
        <strain>Sprague-Dawley</strain>
        <tissue>Testis</tissue>
    </source>
</reference>
<reference key="2">
    <citation type="journal article" date="2012" name="Nat. Commun.">
        <title>Quantitative maps of protein phosphorylation sites across 14 different rat organs and tissues.</title>
        <authorList>
            <person name="Lundby A."/>
            <person name="Secher A."/>
            <person name="Lage K."/>
            <person name="Nordsborg N.B."/>
            <person name="Dmytriyev A."/>
            <person name="Lundby C."/>
            <person name="Olsen J.V."/>
        </authorList>
    </citation>
    <scope>PHOSPHORYLATION [LARGE SCALE ANALYSIS] AT SER-5 AND SER-652</scope>
    <scope>IDENTIFICATION BY MASS SPECTROMETRY [LARGE SCALE ANALYSIS]</scope>
</reference>
<name>SPT20_RAT</name>
<proteinExistence type="evidence at protein level"/>
<feature type="chain" id="PRO_0000278452" description="Spermatogenesis-associated protein 20">
    <location>
        <begin position="1"/>
        <end position="789"/>
    </location>
</feature>
<feature type="region of interest" description="Disordered" evidence="1">
    <location>
        <begin position="1"/>
        <end position="65"/>
    </location>
</feature>
<feature type="compositionally biased region" description="Basic residues" evidence="1">
    <location>
        <begin position="1"/>
        <end position="19"/>
    </location>
</feature>
<feature type="modified residue" description="Phosphoserine" evidence="3">
    <location>
        <position position="5"/>
    </location>
</feature>
<feature type="modified residue" description="Phosphoserine" evidence="3">
    <location>
        <position position="652"/>
    </location>
</feature>
<comment type="function">
    <text>May play a role in fertility regulation.</text>
</comment>
<comment type="subcellular location">
    <subcellularLocation>
        <location evidence="2">Secreted</location>
    </subcellularLocation>
</comment>
<comment type="tissue specificity">
    <text>Testis-specific and age-dependent (at protein level). Highly expressed. Expressed in round spermatids located in the inner half-layer of the seminiferous epithelium as well as in early elongated spermatids having cytoplasmic protrusions into the tubular lumen.</text>
</comment>
<comment type="developmental stage">
    <text>Detected at age 28 days and was most abundant at age 63 days. No expression at 21 days, seems therefore to be expressed in spermatids and not in spermatocytes or spermatogonia of the germ cells.</text>
</comment>
<protein>
    <recommendedName>
        <fullName>Spermatogenesis-associated protein 20</fullName>
    </recommendedName>
    <alternativeName>
        <fullName>Sperm-specific protein 411</fullName>
        <shortName>Ssp411</shortName>
    </alternativeName>
</protein>
<sequence>MSHHSPPPPKHKGEHKGHGLPRGSERGSSSRGKDRSASVSNSVPMPAGGKASRTNCPPPAPQKTANRLINEKSPYLLQHAHNPVDWYPWGQEAFDKAKKENKPIFLSVGYSTCHWCHMMEEESFQNEEIGHLLNENFVSVMVDREERPDVDKVYMTFVQATSSGGGWPMNVWLTPSLQPFVGGTYFPPEDGLTRVGFRTVLMRICDQWKQNKNTLLENSQRVTTALLARSEISVGDRQLPPSAATMNSRCFQQLDEGYDEEYGGFAEAPKFPTPVILNFLFSYWLSHRVTQDGSRAQQMALHTLKMMANGGIRDHVGQGFHRYSTDRQWHIPHFEKMLYDQAQLSVVYCQAFQISGDEFFSDVAKGILQYVTRNLSHRSGGFYSAEDADSPPERGVKPQEGALYLWTVKEVQQLLPEPVGGASEPLTSGQLLMKHYGLSEAGNINPTQDVNGEMHGQNVLTVRDSLELTGARYGLEVEAVRALLNTGLEKLFQARKHRPKAHLDNKMLAAWNGLMVSGFAVAGSVLGMEKLVTQATNGAKFLKRHMFDVSSGRLKRTCYAGAGGTVEQSNPPCWGFLEDYAFVVRGLLDLYEASQESSWLEWALRLQDIQDKLFWDSHGGGYFCSEAELGTDLPLRLKDDQDGAEPSANSVSAHNLLRLHGLTGHKDWMDKCVCLLTAFSERMRRVPVALPEMVRALSAQQQTLKQIVICGDPQAKDTKALLQCVHSIYIPNKVLILADGDPSSFLSRQLPFLSNLRRVEDRATVYIFENQACSMPITDPCELRKLLHQ</sequence>
<dbReference type="EMBL" id="AY438568">
    <property type="protein sequence ID" value="AAR12892.1"/>
    <property type="molecule type" value="mRNA"/>
</dbReference>
<dbReference type="RefSeq" id="NP_955434.1">
    <property type="nucleotide sequence ID" value="NM_199402.1"/>
</dbReference>
<dbReference type="SMR" id="Q6T393"/>
<dbReference type="FunCoup" id="Q6T393">
    <property type="interactions" value="1505"/>
</dbReference>
<dbReference type="STRING" id="10116.ENSRNOP00000004377"/>
<dbReference type="iPTMnet" id="Q6T393"/>
<dbReference type="PhosphoSitePlus" id="Q6T393"/>
<dbReference type="PaxDb" id="10116-ENSRNOP00000004377"/>
<dbReference type="GeneID" id="360604"/>
<dbReference type="KEGG" id="rno:360604"/>
<dbReference type="AGR" id="RGD:735087"/>
<dbReference type="CTD" id="64847"/>
<dbReference type="RGD" id="735087">
    <property type="gene designation" value="Spata20"/>
</dbReference>
<dbReference type="eggNOG" id="KOG2244">
    <property type="taxonomic scope" value="Eukaryota"/>
</dbReference>
<dbReference type="InParanoid" id="Q6T393"/>
<dbReference type="OrthoDB" id="17667at9989"/>
<dbReference type="PhylomeDB" id="Q6T393"/>
<dbReference type="PRO" id="PR:Q6T393"/>
<dbReference type="Proteomes" id="UP000002494">
    <property type="component" value="Unplaced"/>
</dbReference>
<dbReference type="GO" id="GO:0005576">
    <property type="term" value="C:extracellular region"/>
    <property type="evidence" value="ECO:0007669"/>
    <property type="project" value="UniProtKB-SubCell"/>
</dbReference>
<dbReference type="GO" id="GO:0005975">
    <property type="term" value="P:carbohydrate metabolic process"/>
    <property type="evidence" value="ECO:0007669"/>
    <property type="project" value="InterPro"/>
</dbReference>
<dbReference type="GO" id="GO:0030154">
    <property type="term" value="P:cell differentiation"/>
    <property type="evidence" value="ECO:0007669"/>
    <property type="project" value="UniProtKB-KW"/>
</dbReference>
<dbReference type="GO" id="GO:0007283">
    <property type="term" value="P:spermatogenesis"/>
    <property type="evidence" value="ECO:0000303"/>
    <property type="project" value="RGD"/>
</dbReference>
<dbReference type="CDD" id="cd02955">
    <property type="entry name" value="SSP411"/>
    <property type="match status" value="1"/>
</dbReference>
<dbReference type="Gene3D" id="1.50.10.10">
    <property type="match status" value="1"/>
</dbReference>
<dbReference type="Gene3D" id="3.40.30.10">
    <property type="entry name" value="Glutaredoxin"/>
    <property type="match status" value="1"/>
</dbReference>
<dbReference type="InterPro" id="IPR008928">
    <property type="entry name" value="6-hairpin_glycosidase_sf"/>
</dbReference>
<dbReference type="InterPro" id="IPR012341">
    <property type="entry name" value="6hp_glycosidase-like_sf"/>
</dbReference>
<dbReference type="InterPro" id="IPR024705">
    <property type="entry name" value="Ssp411"/>
</dbReference>
<dbReference type="InterPro" id="IPR004879">
    <property type="entry name" value="Ssp411-like_TRX"/>
</dbReference>
<dbReference type="InterPro" id="IPR036249">
    <property type="entry name" value="Thioredoxin-like_sf"/>
</dbReference>
<dbReference type="PANTHER" id="PTHR42899">
    <property type="entry name" value="SPERMATOGENESIS-ASSOCIATED PROTEIN 20"/>
    <property type="match status" value="1"/>
</dbReference>
<dbReference type="PANTHER" id="PTHR42899:SF1">
    <property type="entry name" value="SPERMATOGENESIS-ASSOCIATED PROTEIN 20"/>
    <property type="match status" value="1"/>
</dbReference>
<dbReference type="Pfam" id="PF03190">
    <property type="entry name" value="Thioredox_DsbH"/>
    <property type="match status" value="1"/>
</dbReference>
<dbReference type="PIRSF" id="PIRSF006402">
    <property type="entry name" value="UCP006402_thioredoxin"/>
    <property type="match status" value="1"/>
</dbReference>
<dbReference type="SUPFAM" id="SSF48208">
    <property type="entry name" value="Six-hairpin glycosidases"/>
    <property type="match status" value="1"/>
</dbReference>
<dbReference type="SUPFAM" id="SSF52833">
    <property type="entry name" value="Thioredoxin-like"/>
    <property type="match status" value="1"/>
</dbReference>
<accession>Q6T393</accession>
<organism>
    <name type="scientific">Rattus norvegicus</name>
    <name type="common">Rat</name>
    <dbReference type="NCBI Taxonomy" id="10116"/>
    <lineage>
        <taxon>Eukaryota</taxon>
        <taxon>Metazoa</taxon>
        <taxon>Chordata</taxon>
        <taxon>Craniata</taxon>
        <taxon>Vertebrata</taxon>
        <taxon>Euteleostomi</taxon>
        <taxon>Mammalia</taxon>
        <taxon>Eutheria</taxon>
        <taxon>Euarchontoglires</taxon>
        <taxon>Glires</taxon>
        <taxon>Rodentia</taxon>
        <taxon>Myomorpha</taxon>
        <taxon>Muroidea</taxon>
        <taxon>Muridae</taxon>
        <taxon>Murinae</taxon>
        <taxon>Rattus</taxon>
    </lineage>
</organism>